<keyword id="KW-0375">Hydrogen ion transport</keyword>
<keyword id="KW-0406">Ion transport</keyword>
<keyword id="KW-1185">Reference proteome</keyword>
<keyword id="KW-0813">Transport</keyword>
<proteinExistence type="inferred from homology"/>
<name>VATG_CAEBR</name>
<comment type="function">
    <text evidence="1 2">Subunit of the V1 complex of vacuolar(H+)-ATPase (V-ATPase), a multisubunit enzyme composed of a peripheral complex (V1) that hydrolyzes ATP and a membrane integral complex (V0) that translocates protons (By similarity). V-ATPase is responsible for acidifying and maintaining the pH of intracellular compartments and in some cell types, is targeted to the plasma membrane, where it is responsible for acidifying the extracellular environment. In neurons, required for necrotic cell death by promoting intracellular acidification (By similarity).</text>
</comment>
<comment type="subunit">
    <text evidence="2">V-ATPase is a heteromultimeric enzyme made up of two complexes: the ATP-hydrolytic V1 complex and the proton translocation V0 complex. The V1 complex consists of three catalytic AB heterodimers that form a heterohexamer, three peripheral stalks each consisting of EG heterodimers, one central rotor including subunits D and F, and the regulatory subunits C and H. The proton translocation complex V0 consists of the proton transport subunit a, a ring of proteolipid subunits c9c'', rotary subunit d, subunits e and f, and the accessory subunits vah-19/Ac45 and vah-20/PRR.</text>
</comment>
<comment type="similarity">
    <text evidence="3">Belongs to the V-ATPase G subunit family.</text>
</comment>
<feature type="chain" id="PRO_0000278128" description="Probable V-type proton ATPase subunit G">
    <location>
        <begin position="1"/>
        <end position="126"/>
    </location>
</feature>
<feature type="region of interest" description="Disordered" evidence="4">
    <location>
        <begin position="23"/>
        <end position="45"/>
    </location>
</feature>
<feature type="compositionally biased region" description="Basic residues" evidence="4">
    <location>
        <begin position="26"/>
        <end position="35"/>
    </location>
</feature>
<organism>
    <name type="scientific">Caenorhabditis briggsae</name>
    <dbReference type="NCBI Taxonomy" id="6238"/>
    <lineage>
        <taxon>Eukaryota</taxon>
        <taxon>Metazoa</taxon>
        <taxon>Ecdysozoa</taxon>
        <taxon>Nematoda</taxon>
        <taxon>Chromadorea</taxon>
        <taxon>Rhabditida</taxon>
        <taxon>Rhabditina</taxon>
        <taxon>Rhabditomorpha</taxon>
        <taxon>Rhabditoidea</taxon>
        <taxon>Rhabditidae</taxon>
        <taxon>Peloderinae</taxon>
        <taxon>Caenorhabditis</taxon>
    </lineage>
</organism>
<accession>Q617N0</accession>
<accession>A8XKY5</accession>
<reference key="1">
    <citation type="journal article" date="2003" name="PLoS Biol.">
        <title>The genome sequence of Caenorhabditis briggsae: a platform for comparative genomics.</title>
        <authorList>
            <person name="Stein L.D."/>
            <person name="Bao Z."/>
            <person name="Blasiar D."/>
            <person name="Blumenthal T."/>
            <person name="Brent M.R."/>
            <person name="Chen N."/>
            <person name="Chinwalla A."/>
            <person name="Clarke L."/>
            <person name="Clee C."/>
            <person name="Coghlan A."/>
            <person name="Coulson A."/>
            <person name="D'Eustachio P."/>
            <person name="Fitch D.H.A."/>
            <person name="Fulton L.A."/>
            <person name="Fulton R.E."/>
            <person name="Griffiths-Jones S."/>
            <person name="Harris T.W."/>
            <person name="Hillier L.W."/>
            <person name="Kamath R."/>
            <person name="Kuwabara P.E."/>
            <person name="Mardis E.R."/>
            <person name="Marra M.A."/>
            <person name="Miner T.L."/>
            <person name="Minx P."/>
            <person name="Mullikin J.C."/>
            <person name="Plumb R.W."/>
            <person name="Rogers J."/>
            <person name="Schein J.E."/>
            <person name="Sohrmann M."/>
            <person name="Spieth J."/>
            <person name="Stajich J.E."/>
            <person name="Wei C."/>
            <person name="Willey D."/>
            <person name="Wilson R.K."/>
            <person name="Durbin R.M."/>
            <person name="Waterston R.H."/>
        </authorList>
    </citation>
    <scope>NUCLEOTIDE SEQUENCE [LARGE SCALE GENOMIC DNA]</scope>
    <source>
        <strain>AF16</strain>
    </source>
</reference>
<evidence type="ECO:0000250" key="1">
    <source>
        <dbReference type="UniProtKB" id="P91303"/>
    </source>
</evidence>
<evidence type="ECO:0000250" key="2">
    <source>
        <dbReference type="UniProtKB" id="Q0VCV6"/>
    </source>
</evidence>
<evidence type="ECO:0000255" key="3"/>
<evidence type="ECO:0000256" key="4">
    <source>
        <dbReference type="SAM" id="MobiDB-lite"/>
    </source>
</evidence>
<evidence type="ECO:0000312" key="5">
    <source>
        <dbReference type="WormBase" id="CBG14904"/>
    </source>
</evidence>
<sequence length="126" mass="14586">MASQTQGIQQLLAAEKRAAEKINEARKRKLQRTKQAKQEAQAEVEKYKQQREQEFKGFEQQYLGTKEDIESKIRRDTEDQINGMKQSVASNKQAVIVRLLQLVCDIKPELHHNLTLQKKLHGQFAA</sequence>
<gene>
    <name evidence="1" type="primary">vha-10</name>
    <name evidence="5" type="ORF">CBG14904</name>
</gene>
<dbReference type="EMBL" id="HE600904">
    <property type="protein sequence ID" value="CAP33309.1"/>
    <property type="molecule type" value="Genomic_DNA"/>
</dbReference>
<dbReference type="SMR" id="Q617N0"/>
<dbReference type="FunCoup" id="Q617N0">
    <property type="interactions" value="1704"/>
</dbReference>
<dbReference type="STRING" id="6238.Q617N0"/>
<dbReference type="EnsemblMetazoa" id="CBG14904.1">
    <property type="protein sequence ID" value="CBG14904.1"/>
    <property type="gene ID" value="WBGene00035279"/>
</dbReference>
<dbReference type="KEGG" id="cbr:CBG_14904"/>
<dbReference type="CTD" id="8581080"/>
<dbReference type="WormBase" id="CBG14904">
    <property type="protein sequence ID" value="CBP03599"/>
    <property type="gene ID" value="WBGene00035279"/>
    <property type="gene designation" value="Cbr-vha-10"/>
</dbReference>
<dbReference type="eggNOG" id="KOG1772">
    <property type="taxonomic scope" value="Eukaryota"/>
</dbReference>
<dbReference type="HOGENOM" id="CLU_125101_1_1_1"/>
<dbReference type="InParanoid" id="Q617N0"/>
<dbReference type="OMA" id="ARKYRQD"/>
<dbReference type="OrthoDB" id="250802at2759"/>
<dbReference type="Proteomes" id="UP000008549">
    <property type="component" value="Unassembled WGS sequence"/>
</dbReference>
<dbReference type="GO" id="GO:0098793">
    <property type="term" value="C:presynapse"/>
    <property type="evidence" value="ECO:0007669"/>
    <property type="project" value="GOC"/>
</dbReference>
<dbReference type="GO" id="GO:0000221">
    <property type="term" value="C:vacuolar proton-transporting V-type ATPase, V1 domain"/>
    <property type="evidence" value="ECO:0000318"/>
    <property type="project" value="GO_Central"/>
</dbReference>
<dbReference type="GO" id="GO:0016887">
    <property type="term" value="F:ATP hydrolysis activity"/>
    <property type="evidence" value="ECO:0000318"/>
    <property type="project" value="GO_Central"/>
</dbReference>
<dbReference type="GO" id="GO:0046961">
    <property type="term" value="F:proton-transporting ATPase activity, rotational mechanism"/>
    <property type="evidence" value="ECO:0000318"/>
    <property type="project" value="GO_Central"/>
</dbReference>
<dbReference type="GO" id="GO:0043068">
    <property type="term" value="P:positive regulation of programmed cell death"/>
    <property type="evidence" value="ECO:0007669"/>
    <property type="project" value="EnsemblMetazoa"/>
</dbReference>
<dbReference type="GO" id="GO:0012501">
    <property type="term" value="P:programmed cell death"/>
    <property type="evidence" value="ECO:0000250"/>
    <property type="project" value="UniProtKB"/>
</dbReference>
<dbReference type="GO" id="GO:0097401">
    <property type="term" value="P:synaptic vesicle lumen acidification"/>
    <property type="evidence" value="ECO:0000318"/>
    <property type="project" value="GO_Central"/>
</dbReference>
<dbReference type="FunFam" id="1.20.5.2950:FF:000001">
    <property type="entry name" value="V-type proton ATPase subunit G"/>
    <property type="match status" value="1"/>
</dbReference>
<dbReference type="FunFam" id="1.20.5.620:FF:000004">
    <property type="entry name" value="V-type proton ATPase subunit G"/>
    <property type="match status" value="1"/>
</dbReference>
<dbReference type="Gene3D" id="1.20.5.2950">
    <property type="match status" value="1"/>
</dbReference>
<dbReference type="InterPro" id="IPR005124">
    <property type="entry name" value="V-ATPase_G"/>
</dbReference>
<dbReference type="NCBIfam" id="TIGR01147">
    <property type="entry name" value="V_ATP_synt_G"/>
    <property type="match status" value="1"/>
</dbReference>
<dbReference type="PANTHER" id="PTHR12713:SF11">
    <property type="entry name" value="V-TYPE PROTON ATPASE SUBUNIT G"/>
    <property type="match status" value="1"/>
</dbReference>
<dbReference type="PANTHER" id="PTHR12713">
    <property type="entry name" value="VACUOLAR ATP SYNTHASE SUBUNIT G"/>
    <property type="match status" value="1"/>
</dbReference>
<dbReference type="Pfam" id="PF03179">
    <property type="entry name" value="V-ATPase_G"/>
    <property type="match status" value="1"/>
</dbReference>
<protein>
    <recommendedName>
        <fullName>Probable V-type proton ATPase subunit G</fullName>
        <shortName>V-ATPase subunit G</shortName>
    </recommendedName>
    <alternativeName>
        <fullName>Vacuolar proton pump subunit G</fullName>
    </alternativeName>
</protein>